<protein>
    <recommendedName>
        <fullName>Cytochrome c-type protein NrfB</fullName>
    </recommendedName>
</protein>
<feature type="signal peptide" evidence="2">
    <location>
        <begin position="1"/>
        <end position="39"/>
    </location>
</feature>
<feature type="chain" id="PRO_0000006586" description="Cytochrome c-type protein NrfB">
    <location>
        <begin position="40"/>
        <end position="226"/>
    </location>
</feature>
<feature type="binding site" description="covalent" evidence="1">
    <location>
        <position position="65"/>
    </location>
    <ligand>
        <name>heme</name>
        <dbReference type="ChEBI" id="CHEBI:30413"/>
        <label>1</label>
    </ligand>
</feature>
<feature type="binding site" description="covalent" evidence="1">
    <location>
        <position position="68"/>
    </location>
    <ligand>
        <name>heme</name>
        <dbReference type="ChEBI" id="CHEBI:30413"/>
        <label>1</label>
    </ligand>
</feature>
<feature type="binding site" description="axial binding residue" evidence="1">
    <location>
        <position position="69"/>
    </location>
    <ligand>
        <name>heme</name>
        <dbReference type="ChEBI" id="CHEBI:30413"/>
        <label>1</label>
    </ligand>
    <ligandPart>
        <name>Fe</name>
        <dbReference type="ChEBI" id="CHEBI:18248"/>
    </ligandPart>
</feature>
<feature type="binding site" description="covalent" evidence="1">
    <location>
        <position position="110"/>
    </location>
    <ligand>
        <name>heme</name>
        <dbReference type="ChEBI" id="CHEBI:30413"/>
        <label>2</label>
    </ligand>
</feature>
<feature type="binding site" description="covalent" evidence="1">
    <location>
        <position position="113"/>
    </location>
    <ligand>
        <name>heme</name>
        <dbReference type="ChEBI" id="CHEBI:30413"/>
        <label>2</label>
    </ligand>
</feature>
<feature type="binding site" description="axial binding residue" evidence="1">
    <location>
        <position position="114"/>
    </location>
    <ligand>
        <name>heme</name>
        <dbReference type="ChEBI" id="CHEBI:30413"/>
        <label>2</label>
    </ligand>
    <ligandPart>
        <name>Fe</name>
        <dbReference type="ChEBI" id="CHEBI:18248"/>
    </ligandPart>
</feature>
<feature type="binding site" description="covalent" evidence="1">
    <location>
        <position position="152"/>
    </location>
    <ligand>
        <name>heme</name>
        <dbReference type="ChEBI" id="CHEBI:30413"/>
        <label>3</label>
    </ligand>
</feature>
<feature type="binding site" description="covalent" evidence="1">
    <location>
        <position position="155"/>
    </location>
    <ligand>
        <name>heme</name>
        <dbReference type="ChEBI" id="CHEBI:30413"/>
        <label>3</label>
    </ligand>
</feature>
<feature type="binding site" description="axial binding residue" evidence="1">
    <location>
        <position position="156"/>
    </location>
    <ligand>
        <name>heme</name>
        <dbReference type="ChEBI" id="CHEBI:30413"/>
        <label>3</label>
    </ligand>
    <ligandPart>
        <name>Fe</name>
        <dbReference type="ChEBI" id="CHEBI:18248"/>
    </ligandPart>
</feature>
<feature type="binding site" description="covalent" evidence="1">
    <location>
        <position position="177"/>
    </location>
    <ligand>
        <name>heme</name>
        <dbReference type="ChEBI" id="CHEBI:30413"/>
        <label>4</label>
    </ligand>
</feature>
<feature type="binding site" description="covalent" evidence="1">
    <location>
        <position position="180"/>
    </location>
    <ligand>
        <name>heme</name>
        <dbReference type="ChEBI" id="CHEBI:30413"/>
        <label>4</label>
    </ligand>
</feature>
<feature type="binding site" description="axial binding residue" evidence="1">
    <location>
        <position position="181"/>
    </location>
    <ligand>
        <name>heme</name>
        <dbReference type="ChEBI" id="CHEBI:30413"/>
        <label>4</label>
    </ligand>
    <ligandPart>
        <name>Fe</name>
        <dbReference type="ChEBI" id="CHEBI:18248"/>
    </ligandPart>
</feature>
<feature type="binding site" description="covalent" evidence="1">
    <location>
        <position position="202"/>
    </location>
    <ligand>
        <name>heme</name>
        <dbReference type="ChEBI" id="CHEBI:30413"/>
        <label>5</label>
    </ligand>
</feature>
<feature type="binding site" description="covalent" evidence="1">
    <location>
        <position position="205"/>
    </location>
    <ligand>
        <name>heme</name>
        <dbReference type="ChEBI" id="CHEBI:30413"/>
        <label>5</label>
    </ligand>
</feature>
<feature type="binding site" description="axial binding residue" evidence="1">
    <location>
        <position position="206"/>
    </location>
    <ligand>
        <name>heme</name>
        <dbReference type="ChEBI" id="CHEBI:30413"/>
        <label>5</label>
    </ligand>
    <ligandPart>
        <name>Fe</name>
        <dbReference type="ChEBI" id="CHEBI:18248"/>
    </ligandPart>
</feature>
<reference key="1">
    <citation type="journal article" date="1995" name="Science">
        <title>Whole-genome random sequencing and assembly of Haemophilus influenzae Rd.</title>
        <authorList>
            <person name="Fleischmann R.D."/>
            <person name="Adams M.D."/>
            <person name="White O."/>
            <person name="Clayton R.A."/>
            <person name="Kirkness E.F."/>
            <person name="Kerlavage A.R."/>
            <person name="Bult C.J."/>
            <person name="Tomb J.-F."/>
            <person name="Dougherty B.A."/>
            <person name="Merrick J.M."/>
            <person name="McKenney K."/>
            <person name="Sutton G.G."/>
            <person name="FitzHugh W."/>
            <person name="Fields C.A."/>
            <person name="Gocayne J.D."/>
            <person name="Scott J.D."/>
            <person name="Shirley R."/>
            <person name="Liu L.-I."/>
            <person name="Glodek A."/>
            <person name="Kelley J.M."/>
            <person name="Weidman J.F."/>
            <person name="Phillips C.A."/>
            <person name="Spriggs T."/>
            <person name="Hedblom E."/>
            <person name="Cotton M.D."/>
            <person name="Utterback T.R."/>
            <person name="Hanna M.C."/>
            <person name="Nguyen D.T."/>
            <person name="Saudek D.M."/>
            <person name="Brandon R.C."/>
            <person name="Fine L.D."/>
            <person name="Fritchman J.L."/>
            <person name="Fuhrmann J.L."/>
            <person name="Geoghagen N.S.M."/>
            <person name="Gnehm C.L."/>
            <person name="McDonald L.A."/>
            <person name="Small K.V."/>
            <person name="Fraser C.M."/>
            <person name="Smith H.O."/>
            <person name="Venter J.C."/>
        </authorList>
    </citation>
    <scope>NUCLEOTIDE SEQUENCE [LARGE SCALE GENOMIC DNA]</scope>
    <source>
        <strain>ATCC 51907 / DSM 11121 / KW20 / Rd</strain>
    </source>
</reference>
<keyword id="KW-0249">Electron transport</keyword>
<keyword id="KW-0349">Heme</keyword>
<keyword id="KW-0408">Iron</keyword>
<keyword id="KW-0479">Metal-binding</keyword>
<keyword id="KW-0574">Periplasm</keyword>
<keyword id="KW-1185">Reference proteome</keyword>
<keyword id="KW-0732">Signal</keyword>
<keyword id="KW-0813">Transport</keyword>
<name>NRFB_HAEIN</name>
<accession>P45016</accession>
<gene>
    <name type="primary">nrfB</name>
    <name type="ordered locus">HI_1068</name>
</gene>
<evidence type="ECO:0000250" key="1"/>
<evidence type="ECO:0000255" key="2"/>
<evidence type="ECO:0000305" key="3"/>
<comment type="function">
    <text evidence="1">Plays a role in nitrite reduction.</text>
</comment>
<comment type="pathway">
    <text>Energy metabolism; nitrogen metabolism.</text>
</comment>
<comment type="subcellular location">
    <subcellularLocation>
        <location evidence="3">Periplasm</location>
    </subcellularLocation>
</comment>
<comment type="PTM">
    <text evidence="1">Binds 5 heme groups per subunit.</text>
</comment>
<organism>
    <name type="scientific">Haemophilus influenzae (strain ATCC 51907 / DSM 11121 / KW20 / Rd)</name>
    <dbReference type="NCBI Taxonomy" id="71421"/>
    <lineage>
        <taxon>Bacteria</taxon>
        <taxon>Pseudomonadati</taxon>
        <taxon>Pseudomonadota</taxon>
        <taxon>Gammaproteobacteria</taxon>
        <taxon>Pasteurellales</taxon>
        <taxon>Pasteurellaceae</taxon>
        <taxon>Haemophilus</taxon>
    </lineage>
</organism>
<dbReference type="EMBL" id="L42023">
    <property type="protein sequence ID" value="AAC22726.1"/>
    <property type="molecule type" value="Genomic_DNA"/>
</dbReference>
<dbReference type="PIR" id="B64181">
    <property type="entry name" value="B64181"/>
</dbReference>
<dbReference type="RefSeq" id="NP_439226.2">
    <property type="nucleotide sequence ID" value="NC_000907.1"/>
</dbReference>
<dbReference type="SMR" id="P45016"/>
<dbReference type="STRING" id="71421.HI_1068"/>
<dbReference type="EnsemblBacteria" id="AAC22726">
    <property type="protein sequence ID" value="AAC22726"/>
    <property type="gene ID" value="HI_1068"/>
</dbReference>
<dbReference type="KEGG" id="hin:HI_1068"/>
<dbReference type="PATRIC" id="fig|71421.8.peg.1112"/>
<dbReference type="eggNOG" id="COG3303">
    <property type="taxonomic scope" value="Bacteria"/>
</dbReference>
<dbReference type="HOGENOM" id="CLU_104606_0_0_6"/>
<dbReference type="OrthoDB" id="6398708at2"/>
<dbReference type="PhylomeDB" id="P45016"/>
<dbReference type="UniPathway" id="UPA00045"/>
<dbReference type="Proteomes" id="UP000000579">
    <property type="component" value="Chromosome"/>
</dbReference>
<dbReference type="GO" id="GO:0042597">
    <property type="term" value="C:periplasmic space"/>
    <property type="evidence" value="ECO:0007669"/>
    <property type="project" value="UniProtKB-SubCell"/>
</dbReference>
<dbReference type="GO" id="GO:0020037">
    <property type="term" value="F:heme binding"/>
    <property type="evidence" value="ECO:0007669"/>
    <property type="project" value="InterPro"/>
</dbReference>
<dbReference type="GO" id="GO:0046872">
    <property type="term" value="F:metal ion binding"/>
    <property type="evidence" value="ECO:0007669"/>
    <property type="project" value="UniProtKB-KW"/>
</dbReference>
<dbReference type="GO" id="GO:0016491">
    <property type="term" value="F:oxidoreductase activity"/>
    <property type="evidence" value="ECO:0000318"/>
    <property type="project" value="GO_Central"/>
</dbReference>
<dbReference type="Gene3D" id="3.90.10.10">
    <property type="entry name" value="Cytochrome C3"/>
    <property type="match status" value="1"/>
</dbReference>
<dbReference type="Gene3D" id="1.10.1130.10">
    <property type="entry name" value="Flavocytochrome C3, Chain A"/>
    <property type="match status" value="1"/>
</dbReference>
<dbReference type="InterPro" id="IPR017564">
    <property type="entry name" value="Cyt_c_NrfB"/>
</dbReference>
<dbReference type="InterPro" id="IPR053875">
    <property type="entry name" value="Cytochrom_c_NrfB-like_dom"/>
</dbReference>
<dbReference type="InterPro" id="IPR036280">
    <property type="entry name" value="Multihaem_cyt_sf"/>
</dbReference>
<dbReference type="InterPro" id="IPR051829">
    <property type="entry name" value="Multiheme_Cytochr_ET"/>
</dbReference>
<dbReference type="NCBIfam" id="TIGR03146">
    <property type="entry name" value="cyt_nit_nrfB"/>
    <property type="match status" value="1"/>
</dbReference>
<dbReference type="NCBIfam" id="NF008659">
    <property type="entry name" value="PRK11659.1"/>
    <property type="match status" value="1"/>
</dbReference>
<dbReference type="PANTHER" id="PTHR35038:SF5">
    <property type="entry name" value="CYTOCHROME C-TYPE PROTEIN NRFB"/>
    <property type="match status" value="1"/>
</dbReference>
<dbReference type="PANTHER" id="PTHR35038">
    <property type="entry name" value="DISSIMILATORY SULFITE REDUCTASE SIRA"/>
    <property type="match status" value="1"/>
</dbReference>
<dbReference type="Pfam" id="PF22678">
    <property type="entry name" value="Cytochrom_c_NrfB-like"/>
    <property type="match status" value="1"/>
</dbReference>
<dbReference type="SUPFAM" id="SSF48695">
    <property type="entry name" value="Multiheme cytochromes"/>
    <property type="match status" value="1"/>
</dbReference>
<dbReference type="PROSITE" id="PS51008">
    <property type="entry name" value="MULTIHEME_CYTC"/>
    <property type="match status" value="1"/>
</dbReference>
<sequence>MIFKVKFEVTQMILTSLINKSAKALVIVAFVAAPFLAHADDAQKPAVHVTYEPQLDNQRDPNQYCAKCHKFDKIDKNQTLDQSGGELHFGKFHGAHLDKKNPNNGKAITCVSCHGNISENHRRGAKDVMRFEGDIFGNKKPMYSVQEQNQVCFACHQPDKLREKLWAHDVHAMKLPCASCHTLHPKEDAMKGIQPKQRVKLCVDCHGEQQKRKAEQDKLIEQKDKL</sequence>
<proteinExistence type="inferred from homology"/>